<name>IMDH2_BOVIN</name>
<evidence type="ECO:0000250" key="1">
    <source>
        <dbReference type="UniProtKB" id="P12268"/>
    </source>
</evidence>
<evidence type="ECO:0000255" key="2">
    <source>
        <dbReference type="HAMAP-Rule" id="MF_03156"/>
    </source>
</evidence>
<accession>Q3SWY3</accession>
<sequence length="514" mass="55763">MADYLISGGTSYVPDDGLTAQQLFNCGDGLTYNDFLILPGYIDFTADQVDLTSALTKKITLKTPLVSSPMDTVTEAGMAIAMALTGGIGFIHHNCTPEFQANEVRKVKKYEQGFITDPVVLSPRDRVRDVFEAKARHGFCGIPITDTGRMGSHLVGIISSRDIDFLKEEEHDRLLGEIMTKREDLVVAPAGITLKEANEILQRSKKGKLPIVNENDELVAIIARTDLKKNRDYPLASKDAKKQLLCGAAIGTHEDDKYRLDLLSQAGVDVVVLDSSQGNSIFQINMIKYIKEKYPSIQVIGGNVVTAAQAKNLIDAGVDALRVGMGSGSICITQEVLACGRPQATAVYKVSEYARRFGVPVIADGGIQNVGHIAKALALGASTVMMGSLLAATTEAPGEYFFSDGIRLKKYRGMGSLDAMDKHLSSQNRYFSEADKIKVAQGVSGAVQDKGSIHKFVPYLIAGIQHSCQDIGAKSLTQVRAMMYSGELKFEKRTSSAQVEGGVHSLHSYEKRLF</sequence>
<reference key="1">
    <citation type="submission" date="2005-09" db="EMBL/GenBank/DDBJ databases">
        <authorList>
            <consortium name="NIH - Mammalian Gene Collection (MGC) project"/>
        </authorList>
    </citation>
    <scope>NUCLEOTIDE SEQUENCE [LARGE SCALE MRNA]</scope>
    <source>
        <strain>Hereford</strain>
        <tissue>Ascending colon</tissue>
    </source>
</reference>
<feature type="chain" id="PRO_0000239736" description="Inosine-5'-monophosphate dehydrogenase 2">
    <location>
        <begin position="1"/>
        <end position="514"/>
    </location>
</feature>
<feature type="domain" description="CBS 1" evidence="2">
    <location>
        <begin position="114"/>
        <end position="173"/>
    </location>
</feature>
<feature type="domain" description="CBS 2" evidence="2">
    <location>
        <begin position="179"/>
        <end position="237"/>
    </location>
</feature>
<feature type="active site" description="Thioimidate intermediate" evidence="2">
    <location>
        <position position="331"/>
    </location>
</feature>
<feature type="active site" description="Proton acceptor" evidence="2">
    <location>
        <position position="429"/>
    </location>
</feature>
<feature type="binding site" evidence="2">
    <location>
        <begin position="274"/>
        <end position="276"/>
    </location>
    <ligand>
        <name>NAD(+)</name>
        <dbReference type="ChEBI" id="CHEBI:57540"/>
    </ligand>
</feature>
<feature type="binding site" evidence="2">
    <location>
        <begin position="324"/>
        <end position="326"/>
    </location>
    <ligand>
        <name>NAD(+)</name>
        <dbReference type="ChEBI" id="CHEBI:57540"/>
    </ligand>
</feature>
<feature type="binding site" description="in other chain" evidence="2">
    <location>
        <position position="326"/>
    </location>
    <ligand>
        <name>K(+)</name>
        <dbReference type="ChEBI" id="CHEBI:29103"/>
        <note>ligand shared between two tetrameric partners</note>
    </ligand>
</feature>
<feature type="binding site" description="in other chain" evidence="2">
    <location>
        <position position="328"/>
    </location>
    <ligand>
        <name>K(+)</name>
        <dbReference type="ChEBI" id="CHEBI:29103"/>
        <note>ligand shared between two tetrameric partners</note>
    </ligand>
</feature>
<feature type="binding site" evidence="2">
    <location>
        <position position="329"/>
    </location>
    <ligand>
        <name>IMP</name>
        <dbReference type="ChEBI" id="CHEBI:58053"/>
    </ligand>
</feature>
<feature type="binding site" description="in other chain" evidence="2">
    <location>
        <position position="331"/>
    </location>
    <ligand>
        <name>K(+)</name>
        <dbReference type="ChEBI" id="CHEBI:29103"/>
        <note>ligand shared between two tetrameric partners</note>
    </ligand>
</feature>
<feature type="binding site" evidence="2">
    <location>
        <begin position="364"/>
        <end position="366"/>
    </location>
    <ligand>
        <name>IMP</name>
        <dbReference type="ChEBI" id="CHEBI:58053"/>
    </ligand>
</feature>
<feature type="binding site" evidence="2">
    <location>
        <begin position="387"/>
        <end position="388"/>
    </location>
    <ligand>
        <name>IMP</name>
        <dbReference type="ChEBI" id="CHEBI:58053"/>
    </ligand>
</feature>
<feature type="binding site" evidence="2">
    <location>
        <begin position="411"/>
        <end position="415"/>
    </location>
    <ligand>
        <name>IMP</name>
        <dbReference type="ChEBI" id="CHEBI:58053"/>
    </ligand>
</feature>
<feature type="binding site" evidence="2">
    <location>
        <position position="441"/>
    </location>
    <ligand>
        <name>IMP</name>
        <dbReference type="ChEBI" id="CHEBI:58053"/>
    </ligand>
</feature>
<feature type="binding site" evidence="2">
    <location>
        <position position="500"/>
    </location>
    <ligand>
        <name>K(+)</name>
        <dbReference type="ChEBI" id="CHEBI:29103"/>
        <note>ligand shared between two tetrameric partners</note>
    </ligand>
</feature>
<feature type="binding site" evidence="2">
    <location>
        <position position="501"/>
    </location>
    <ligand>
        <name>K(+)</name>
        <dbReference type="ChEBI" id="CHEBI:29103"/>
        <note>ligand shared between two tetrameric partners</note>
    </ligand>
</feature>
<feature type="binding site" evidence="2">
    <location>
        <position position="502"/>
    </location>
    <ligand>
        <name>K(+)</name>
        <dbReference type="ChEBI" id="CHEBI:29103"/>
        <note>ligand shared between two tetrameric partners</note>
    </ligand>
</feature>
<feature type="modified residue" description="Phosphoserine" evidence="1">
    <location>
        <position position="122"/>
    </location>
</feature>
<feature type="modified residue" description="Phosphoserine" evidence="1">
    <location>
        <position position="160"/>
    </location>
</feature>
<feature type="modified residue" description="Phosphotyrosine" evidence="1">
    <location>
        <position position="400"/>
    </location>
</feature>
<feature type="modified residue" description="Phosphoserine" evidence="1">
    <location>
        <position position="416"/>
    </location>
</feature>
<feature type="modified residue" description="N6-acetyllysine" evidence="1">
    <location>
        <position position="511"/>
    </location>
</feature>
<feature type="cross-link" description="Glycyl lysine isopeptide (Lys-Gly) (interchain with G-Cter in SUMO2)" evidence="1">
    <location>
        <position position="195"/>
    </location>
</feature>
<feature type="cross-link" description="Glycyl lysine isopeptide (Lys-Gly) (interchain with G-Cter in SUMO2)" evidence="1">
    <location>
        <position position="208"/>
    </location>
</feature>
<feature type="cross-link" description="Glycyl lysine isopeptide (Lys-Gly) (interchain with G-Cter in SUMO2)" evidence="1">
    <location>
        <position position="438"/>
    </location>
</feature>
<comment type="function">
    <text evidence="1">Catalyzes the conversion of inosine 5'-phosphate (IMP) to xanthosine 5'-phosphate (XMP), the first committed and rate-limiting step in the de novo synthesis of guanine nucleotides, and therefore plays an important role in the regulation of cell growth. Could also have a single-stranded nucleic acid-binding activity and could play a role in RNA and/or DNA metabolism. It may also have a role in the development of malignancy and the growth progression of some tumors.</text>
</comment>
<comment type="catalytic activity">
    <reaction evidence="1">
        <text>IMP + NAD(+) + H2O = XMP + NADH + H(+)</text>
        <dbReference type="Rhea" id="RHEA:11708"/>
        <dbReference type="ChEBI" id="CHEBI:15377"/>
        <dbReference type="ChEBI" id="CHEBI:15378"/>
        <dbReference type="ChEBI" id="CHEBI:57464"/>
        <dbReference type="ChEBI" id="CHEBI:57540"/>
        <dbReference type="ChEBI" id="CHEBI:57945"/>
        <dbReference type="ChEBI" id="CHEBI:58053"/>
        <dbReference type="EC" id="1.1.1.205"/>
    </reaction>
</comment>
<comment type="cofactor">
    <cofactor evidence="2">
        <name>K(+)</name>
        <dbReference type="ChEBI" id="CHEBI:29103"/>
    </cofactor>
</comment>
<comment type="activity regulation">
    <text evidence="2">Mycophenolic acid (MPA) is a non-competitive inhibitor that prevents formation of the closed enzyme conformation by binding to the same site as the amobile flap. In contrast, mizoribine monophosphate (MZP) is a competitive inhibitor that induces the closed conformation. MPA is a potent inhibitor of mammalian IMPDHs but a poor inhibitor of the bacterial enzymes. MZP is a more potent inhibitor of bacterial IMPDH.</text>
</comment>
<comment type="pathway">
    <text evidence="1">Purine metabolism; XMP biosynthesis via de novo pathway; XMP from IMP: step 1/1.</text>
</comment>
<comment type="subunit">
    <text evidence="1">Homotetramer. Interacts with CLOCK; in a circadian manner. Interacts with ANKRD9; leading to its ubiquitination and degradation by the proteasome.</text>
</comment>
<comment type="subcellular location">
    <subcellularLocation>
        <location evidence="1">Cytoplasm</location>
    </subcellularLocation>
    <subcellularLocation>
        <location evidence="1">Nucleus</location>
    </subcellularLocation>
    <subcellularLocation>
        <location evidence="1">Cytoplasm</location>
        <location evidence="1">Cytosol</location>
    </subcellularLocation>
    <text evidence="1">Can form fiber-like subcellular structures termed 'cytoophidia' in response to intracellular guanine-nucleotide depletion.</text>
</comment>
<comment type="PTM">
    <text evidence="1">Acetylated by CLOCK in a circadian manner.</text>
</comment>
<comment type="PTM">
    <text evidence="1">Ubiquitinated leading to its degradation by the proteasome.</text>
</comment>
<comment type="similarity">
    <text evidence="2">Belongs to the IMPDH/GMPR family.</text>
</comment>
<dbReference type="EC" id="1.1.1.205" evidence="1"/>
<dbReference type="EMBL" id="BC104602">
    <property type="protein sequence ID" value="AAI04603.1"/>
    <property type="molecule type" value="mRNA"/>
</dbReference>
<dbReference type="RefSeq" id="NP_001029588.1">
    <property type="nucleotide sequence ID" value="NM_001034416.1"/>
</dbReference>
<dbReference type="SMR" id="Q3SWY3"/>
<dbReference type="FunCoup" id="Q3SWY3">
    <property type="interactions" value="3058"/>
</dbReference>
<dbReference type="STRING" id="9913.ENSBTAP00000025179"/>
<dbReference type="PaxDb" id="9913-ENSBTAP00000025179"/>
<dbReference type="PeptideAtlas" id="Q3SWY3"/>
<dbReference type="GeneID" id="511969"/>
<dbReference type="KEGG" id="bta:511969"/>
<dbReference type="CTD" id="3615"/>
<dbReference type="VEuPathDB" id="HostDB:ENSBTAG00000031837"/>
<dbReference type="eggNOG" id="KOG2550">
    <property type="taxonomic scope" value="Eukaryota"/>
</dbReference>
<dbReference type="HOGENOM" id="CLU_022552_2_1_1"/>
<dbReference type="InParanoid" id="Q3SWY3"/>
<dbReference type="OMA" id="PGSHCTT"/>
<dbReference type="OrthoDB" id="416622at2759"/>
<dbReference type="TreeFam" id="TF300378"/>
<dbReference type="Reactome" id="R-BTA-6798695">
    <property type="pathway name" value="Neutrophil degranulation"/>
</dbReference>
<dbReference type="Reactome" id="R-BTA-73817">
    <property type="pathway name" value="Purine ribonucleoside monophosphate biosynthesis"/>
</dbReference>
<dbReference type="Reactome" id="R-BTA-9748787">
    <property type="pathway name" value="Azathioprine ADME"/>
</dbReference>
<dbReference type="UniPathway" id="UPA00601">
    <property type="reaction ID" value="UER00295"/>
</dbReference>
<dbReference type="Proteomes" id="UP000009136">
    <property type="component" value="Chromosome 22"/>
</dbReference>
<dbReference type="Bgee" id="ENSBTAG00000031837">
    <property type="expression patterns" value="Expressed in theca cell and 108 other cell types or tissues"/>
</dbReference>
<dbReference type="GO" id="GO:0005737">
    <property type="term" value="C:cytoplasm"/>
    <property type="evidence" value="ECO:0000250"/>
    <property type="project" value="UniProtKB"/>
</dbReference>
<dbReference type="GO" id="GO:0005829">
    <property type="term" value="C:cytosol"/>
    <property type="evidence" value="ECO:0000250"/>
    <property type="project" value="UniProtKB"/>
</dbReference>
<dbReference type="GO" id="GO:0005634">
    <property type="term" value="C:nucleus"/>
    <property type="evidence" value="ECO:0000250"/>
    <property type="project" value="UniProtKB"/>
</dbReference>
<dbReference type="GO" id="GO:0003677">
    <property type="term" value="F:DNA binding"/>
    <property type="evidence" value="ECO:0007669"/>
    <property type="project" value="UniProtKB-KW"/>
</dbReference>
<dbReference type="GO" id="GO:0003938">
    <property type="term" value="F:IMP dehydrogenase activity"/>
    <property type="evidence" value="ECO:0000250"/>
    <property type="project" value="UniProtKB"/>
</dbReference>
<dbReference type="GO" id="GO:0046872">
    <property type="term" value="F:metal ion binding"/>
    <property type="evidence" value="ECO:0007669"/>
    <property type="project" value="UniProtKB-UniRule"/>
</dbReference>
<dbReference type="GO" id="GO:0000166">
    <property type="term" value="F:nucleotide binding"/>
    <property type="evidence" value="ECO:0000250"/>
    <property type="project" value="UniProtKB"/>
</dbReference>
<dbReference type="GO" id="GO:0003723">
    <property type="term" value="F:RNA binding"/>
    <property type="evidence" value="ECO:0007669"/>
    <property type="project" value="UniProtKB-KW"/>
</dbReference>
<dbReference type="GO" id="GO:0007623">
    <property type="term" value="P:circadian rhythm"/>
    <property type="evidence" value="ECO:0000250"/>
    <property type="project" value="UniProtKB"/>
</dbReference>
<dbReference type="GO" id="GO:0006177">
    <property type="term" value="P:GMP biosynthetic process"/>
    <property type="evidence" value="ECO:0007669"/>
    <property type="project" value="UniProtKB-UniRule"/>
</dbReference>
<dbReference type="GO" id="GO:0006183">
    <property type="term" value="P:GTP biosynthetic process"/>
    <property type="evidence" value="ECO:0000250"/>
    <property type="project" value="UniProtKB"/>
</dbReference>
<dbReference type="CDD" id="cd04601">
    <property type="entry name" value="CBS_pair_IMPDH"/>
    <property type="match status" value="1"/>
</dbReference>
<dbReference type="CDD" id="cd00381">
    <property type="entry name" value="IMPDH"/>
    <property type="match status" value="1"/>
</dbReference>
<dbReference type="FunFam" id="3.20.20.70:FF:000424">
    <property type="entry name" value="Inosine-5'-monophosphate dehydrogenase 2"/>
    <property type="match status" value="2"/>
</dbReference>
<dbReference type="Gene3D" id="3.20.20.70">
    <property type="entry name" value="Aldolase class I"/>
    <property type="match status" value="1"/>
</dbReference>
<dbReference type="HAMAP" id="MF_01964">
    <property type="entry name" value="IMPDH"/>
    <property type="match status" value="1"/>
</dbReference>
<dbReference type="InterPro" id="IPR013785">
    <property type="entry name" value="Aldolase_TIM"/>
</dbReference>
<dbReference type="InterPro" id="IPR000644">
    <property type="entry name" value="CBS_dom"/>
</dbReference>
<dbReference type="InterPro" id="IPR005990">
    <property type="entry name" value="IMP_DH"/>
</dbReference>
<dbReference type="InterPro" id="IPR015875">
    <property type="entry name" value="IMP_DH/GMP_Rdtase_CS"/>
</dbReference>
<dbReference type="InterPro" id="IPR001093">
    <property type="entry name" value="IMP_DH_GMPRt"/>
</dbReference>
<dbReference type="NCBIfam" id="TIGR01302">
    <property type="entry name" value="IMP_dehydrog"/>
    <property type="match status" value="1"/>
</dbReference>
<dbReference type="PANTHER" id="PTHR11911:SF121">
    <property type="entry name" value="INOSINE-5'-MONOPHOSPHATE DEHYDROGENASE 2"/>
    <property type="match status" value="1"/>
</dbReference>
<dbReference type="PANTHER" id="PTHR11911">
    <property type="entry name" value="INOSINE-5-MONOPHOSPHATE DEHYDROGENASE RELATED"/>
    <property type="match status" value="1"/>
</dbReference>
<dbReference type="Pfam" id="PF00571">
    <property type="entry name" value="CBS"/>
    <property type="match status" value="2"/>
</dbReference>
<dbReference type="Pfam" id="PF00478">
    <property type="entry name" value="IMPDH"/>
    <property type="match status" value="1"/>
</dbReference>
<dbReference type="PIRSF" id="PIRSF000130">
    <property type="entry name" value="IMPDH"/>
    <property type="match status" value="1"/>
</dbReference>
<dbReference type="SMART" id="SM00116">
    <property type="entry name" value="CBS"/>
    <property type="match status" value="2"/>
</dbReference>
<dbReference type="SMART" id="SM01240">
    <property type="entry name" value="IMPDH"/>
    <property type="match status" value="1"/>
</dbReference>
<dbReference type="SUPFAM" id="SSF51412">
    <property type="entry name" value="Inosine monophosphate dehydrogenase (IMPDH)"/>
    <property type="match status" value="2"/>
</dbReference>
<dbReference type="PROSITE" id="PS51371">
    <property type="entry name" value="CBS"/>
    <property type="match status" value="2"/>
</dbReference>
<dbReference type="PROSITE" id="PS00487">
    <property type="entry name" value="IMP_DH_GMP_RED"/>
    <property type="match status" value="1"/>
</dbReference>
<proteinExistence type="evidence at transcript level"/>
<keyword id="KW-0007">Acetylation</keyword>
<keyword id="KW-0129">CBS domain</keyword>
<keyword id="KW-0963">Cytoplasm</keyword>
<keyword id="KW-0238">DNA-binding</keyword>
<keyword id="KW-0332">GMP biosynthesis</keyword>
<keyword id="KW-1017">Isopeptide bond</keyword>
<keyword id="KW-0479">Metal-binding</keyword>
<keyword id="KW-0520">NAD</keyword>
<keyword id="KW-0539">Nucleus</keyword>
<keyword id="KW-0560">Oxidoreductase</keyword>
<keyword id="KW-0597">Phosphoprotein</keyword>
<keyword id="KW-0630">Potassium</keyword>
<keyword id="KW-0658">Purine biosynthesis</keyword>
<keyword id="KW-1185">Reference proteome</keyword>
<keyword id="KW-0677">Repeat</keyword>
<keyword id="KW-0694">RNA-binding</keyword>
<keyword id="KW-0832">Ubl conjugation</keyword>
<gene>
    <name evidence="2" type="primary">IMPDH2</name>
</gene>
<protein>
    <recommendedName>
        <fullName evidence="2">Inosine-5'-monophosphate dehydrogenase 2</fullName>
        <shortName evidence="2">IMP dehydrogenase 2</shortName>
        <shortName evidence="2">IMPD 2</shortName>
        <shortName evidence="2">IMPDH 2</shortName>
        <ecNumber evidence="1">1.1.1.205</ecNumber>
    </recommendedName>
    <alternativeName>
        <fullName>IMPDH-II</fullName>
    </alternativeName>
</protein>
<organism>
    <name type="scientific">Bos taurus</name>
    <name type="common">Bovine</name>
    <dbReference type="NCBI Taxonomy" id="9913"/>
    <lineage>
        <taxon>Eukaryota</taxon>
        <taxon>Metazoa</taxon>
        <taxon>Chordata</taxon>
        <taxon>Craniata</taxon>
        <taxon>Vertebrata</taxon>
        <taxon>Euteleostomi</taxon>
        <taxon>Mammalia</taxon>
        <taxon>Eutheria</taxon>
        <taxon>Laurasiatheria</taxon>
        <taxon>Artiodactyla</taxon>
        <taxon>Ruminantia</taxon>
        <taxon>Pecora</taxon>
        <taxon>Bovidae</taxon>
        <taxon>Bovinae</taxon>
        <taxon>Bos</taxon>
    </lineage>
</organism>